<sequence>MNNALGLVETKGLVGAIEAADAMVKSANVQLVGYEKIGSGLITVMVRGDVGAVKAAVDAGSAAASAVGEVKSCHVIPRPHSDVEAILPKSA</sequence>
<protein>
    <recommendedName>
        <fullName evidence="6">Bacterial microcompartment shell protein PduJ</fullName>
    </recommendedName>
    <alternativeName>
        <fullName evidence="7">Bacterial microcompartment protein homohexamer</fullName>
        <shortName evidence="7">BMC-H</shortName>
    </alternativeName>
    <alternativeName>
        <fullName>Propanediol utilization protein PduJ</fullName>
    </alternativeName>
</protein>
<dbReference type="EMBL" id="AM498294">
    <property type="protein sequence ID" value="CAM57290.1"/>
    <property type="molecule type" value="Genomic_DNA"/>
</dbReference>
<dbReference type="RefSeq" id="WP_001057752.1">
    <property type="nucleotide sequence ID" value="NZ_VWTQ01000002.1"/>
</dbReference>
<dbReference type="SMR" id="P0DUV5"/>
<dbReference type="GeneID" id="93775180"/>
<dbReference type="OrthoDB" id="9812608at2"/>
<dbReference type="UniPathway" id="UPA00621"/>
<dbReference type="GO" id="GO:0031469">
    <property type="term" value="C:bacterial microcompartment"/>
    <property type="evidence" value="ECO:0007669"/>
    <property type="project" value="UniProtKB-SubCell"/>
</dbReference>
<dbReference type="GO" id="GO:0051144">
    <property type="term" value="P:propanediol catabolic process"/>
    <property type="evidence" value="ECO:0007669"/>
    <property type="project" value="UniProtKB-UniPathway"/>
</dbReference>
<dbReference type="CDD" id="cd07045">
    <property type="entry name" value="BMC_CcmK_like"/>
    <property type="match status" value="1"/>
</dbReference>
<dbReference type="Gene3D" id="3.30.70.1710">
    <property type="match status" value="1"/>
</dbReference>
<dbReference type="InterPro" id="IPR020808">
    <property type="entry name" value="Bact_microcomp_CS"/>
</dbReference>
<dbReference type="InterPro" id="IPR000249">
    <property type="entry name" value="BMC_dom"/>
</dbReference>
<dbReference type="InterPro" id="IPR050575">
    <property type="entry name" value="BMC_shell"/>
</dbReference>
<dbReference type="InterPro" id="IPR037233">
    <property type="entry name" value="CcmK-like_sf"/>
</dbReference>
<dbReference type="InterPro" id="IPR044872">
    <property type="entry name" value="CcmK/CsoS1_BMC"/>
</dbReference>
<dbReference type="PANTHER" id="PTHR33941:SF11">
    <property type="entry name" value="BACTERIAL MICROCOMPARTMENT SHELL PROTEIN PDUJ"/>
    <property type="match status" value="1"/>
</dbReference>
<dbReference type="PANTHER" id="PTHR33941">
    <property type="entry name" value="PROPANEDIOL UTILIZATION PROTEIN PDUA"/>
    <property type="match status" value="1"/>
</dbReference>
<dbReference type="Pfam" id="PF00936">
    <property type="entry name" value="BMC"/>
    <property type="match status" value="1"/>
</dbReference>
<dbReference type="SMART" id="SM00877">
    <property type="entry name" value="BMC"/>
    <property type="match status" value="1"/>
</dbReference>
<dbReference type="SUPFAM" id="SSF143414">
    <property type="entry name" value="CcmK-like"/>
    <property type="match status" value="1"/>
</dbReference>
<dbReference type="PROSITE" id="PS01139">
    <property type="entry name" value="BMC_1"/>
    <property type="match status" value="1"/>
</dbReference>
<dbReference type="PROSITE" id="PS51930">
    <property type="entry name" value="BMC_2"/>
    <property type="match status" value="1"/>
</dbReference>
<organism>
    <name type="scientific">Citrobacter freundii</name>
    <dbReference type="NCBI Taxonomy" id="546"/>
    <lineage>
        <taxon>Bacteria</taxon>
        <taxon>Pseudomonadati</taxon>
        <taxon>Pseudomonadota</taxon>
        <taxon>Gammaproteobacteria</taxon>
        <taxon>Enterobacterales</taxon>
        <taxon>Enterobacteriaceae</taxon>
        <taxon>Citrobacter</taxon>
        <taxon>Citrobacter freundii complex</taxon>
    </lineage>
</organism>
<accession>P0DUV5</accession>
<evidence type="ECO:0000250" key="1">
    <source>
        <dbReference type="UniProtKB" id="H9L478"/>
    </source>
</evidence>
<evidence type="ECO:0000255" key="2">
    <source>
        <dbReference type="PROSITE-ProRule" id="PRU01278"/>
    </source>
</evidence>
<evidence type="ECO:0000269" key="3">
    <source>
    </source>
</evidence>
<evidence type="ECO:0000269" key="4">
    <source>
    </source>
</evidence>
<evidence type="ECO:0000269" key="5">
    <source>
    </source>
</evidence>
<evidence type="ECO:0000303" key="6">
    <source>
    </source>
</evidence>
<evidence type="ECO:0000305" key="7"/>
<evidence type="ECO:0000305" key="8">
    <source>
    </source>
</evidence>
<gene>
    <name evidence="6" type="primary">pduJ</name>
</gene>
<feature type="chain" id="PRO_0000454251" description="Bacterial microcompartment shell protein PduJ">
    <location>
        <begin position="1"/>
        <end position="91"/>
    </location>
</feature>
<feature type="domain" description="BMC" evidence="2">
    <location>
        <begin position="4"/>
        <end position="88"/>
    </location>
</feature>
<reference key="1">
    <citation type="journal article" date="2008" name="J. Biol. Chem.">
        <title>Biochemical and Structural Insights into Bacterial Organelle Form and Biogenesis.</title>
        <authorList>
            <person name="Parsons J.B."/>
            <person name="Dinesh S.D."/>
            <person name="Deery E."/>
            <person name="Leech H.K."/>
            <person name="Brindley A.A."/>
            <person name="Heldt D."/>
            <person name="Frank S."/>
            <person name="Smales C.M."/>
            <person name="Lunsdorf H."/>
            <person name="Rambach A."/>
            <person name="Gass M.H."/>
            <person name="Bleloch A."/>
            <person name="McClean K.J."/>
            <person name="Munro A.W."/>
            <person name="Rigby S.E.J."/>
            <person name="Warren M.J."/>
            <person name="Prentice M.B."/>
        </authorList>
    </citation>
    <scope>NUCLEOTIDE SEQUENCE [GENOMIC DNA]</scope>
    <scope>FUNCTION</scope>
    <scope>IDENTIFICATION BY MASS SPECTROMETRY</scope>
    <scope>PATHWAY</scope>
    <scope>SUBCELLULAR LOCATION</scope>
</reference>
<reference key="2">
    <citation type="journal article" date="2010" name="Mol. Cell">
        <title>Synthesis of empty bacterial microcompartments, directed organelle protein incorporation, and evidence of filament-associated organelle movement.</title>
        <authorList>
            <person name="Parsons J.B."/>
            <person name="Frank S."/>
            <person name="Bhella D."/>
            <person name="Liang M."/>
            <person name="Prentice M.B."/>
            <person name="Mulvihill D.P."/>
            <person name="Warren M.J."/>
        </authorList>
    </citation>
    <scope>FUNCTION</scope>
    <scope>INTERACTION WITH PDUA</scope>
    <scope>SUBUNIT</scope>
    <scope>SUBCELLULAR LOCATION</scope>
    <scope>BIOTECHNOLOGY</scope>
</reference>
<reference key="3">
    <citation type="journal article" date="2014" name="ACS Synth. Biol.">
        <title>Solution structure of a bacterial microcompartment targeting peptide and its application in the construction of an ethanol bioreactor.</title>
        <authorList>
            <person name="Lawrence A.D."/>
            <person name="Frank S."/>
            <person name="Newnham S."/>
            <person name="Lee M.J."/>
            <person name="Brown I.R."/>
            <person name="Xue W.F."/>
            <person name="Rowe M.L."/>
            <person name="Mulvihill D.P."/>
            <person name="Prentice M.B."/>
            <person name="Howard M.J."/>
            <person name="Warren M.J."/>
        </authorList>
    </citation>
    <scope>BIOTECHNOLOGY</scope>
</reference>
<keyword id="KW-1283">Bacterial microcompartment</keyword>
<keyword id="KW-0813">Transport</keyword>
<proteinExistence type="evidence at protein level"/>
<name>PDUJ_CITFR</name>
<comment type="function">
    <text evidence="1 8">One of the major shell proteins of the bacterial microcompartment (BMC) dedicated to 1,2-propanediol (1,2-PD) degradation (Probable). At least one of PduA or PduJ is required for BMC assembly; it must be encoded as the first gene in the pdu operon. Required for structural integrity of BMCs and to mitigate propionaldehyde toxicity, probably joins facets responsible for BMC closure. Probably the hub for binding multiple enzymes to the interior of the BMC (By similarity).</text>
</comment>
<comment type="function">
    <text evidence="3">Expression of a cosmid containing the full 21-gene pdu operon in E.coli allows E.coli to grow on 1,2-PD with the appearance of BMCs in its cytoplasm. Overexpression of this protein leads to an internal structure with a whorled architecture.</text>
</comment>
<comment type="function">
    <text evidence="8">The 1,2-PD-specific bacterial microcompartment (BMC) concentrates low levels of 1,2-PD catabolic enzymes, concentrates volatile reaction intermediates thus enhancing pathway flux and keeps the level of toxic, mutagenic propionaldehyde low.</text>
</comment>
<comment type="pathway">
    <text evidence="3">Polyol metabolism; 1,2-propanediol degradation.</text>
</comment>
<comment type="subunit">
    <text evidence="1 4">Homohexamer with a central pore. Interacts with PduP, which targets PduP to the BMC (By similarity). Interacts with shell protein PduA (PubMed:20417607).</text>
</comment>
<comment type="subcellular location">
    <subcellularLocation>
        <location evidence="3 4">Bacterial microcompartment</location>
    </subcellularLocation>
</comment>
<comment type="biotechnology">
    <text evidence="4 5">Artificial BMCs can be made in E.coli by expressing pduA-pduB/B'-pduJ-pduK-pduN-pduU-pduT (in this order); pduT and pduU are optional, while pduA, pduB/B', pduJ, pduK and pduN are essential. A construct with the reversed gene order does not make BMCs (PubMed:20417607). Ethanogenic BMCs can be made in E.coli by targeting pyruvate decarboxylase (pdc) and alcohol dehydrogenase (adh) to them. PduP(1-18)-Pdc and PduD(1-18)-Adh strains targeted to the BMC (PduA, PduB, PduJ, PduK, PduN, PduU) make significantly more ethanol than strains where Pdc and Adh are not targeted to the BMC (PubMed:24933391).</text>
</comment>
<comment type="similarity">
    <text evidence="2">Belongs to the bacterial microcompartments protein family.</text>
</comment>